<keyword id="KW-0997">Cell inner membrane</keyword>
<keyword id="KW-1003">Cell membrane</keyword>
<keyword id="KW-0472">Membrane</keyword>
<keyword id="KW-0812">Transmembrane</keyword>
<keyword id="KW-1133">Transmembrane helix</keyword>
<organism>
    <name type="scientific">Shewanella sp. (strain MR-4)</name>
    <dbReference type="NCBI Taxonomy" id="60480"/>
    <lineage>
        <taxon>Bacteria</taxon>
        <taxon>Pseudomonadati</taxon>
        <taxon>Pseudomonadota</taxon>
        <taxon>Gammaproteobacteria</taxon>
        <taxon>Alteromonadales</taxon>
        <taxon>Shewanellaceae</taxon>
        <taxon>Shewanella</taxon>
    </lineage>
</organism>
<protein>
    <recommendedName>
        <fullName evidence="1">UPF0761 membrane protein Shewmr4_0316</fullName>
    </recommendedName>
</protein>
<name>Y316_SHESM</name>
<comment type="subcellular location">
    <subcellularLocation>
        <location evidence="1">Cell inner membrane</location>
        <topology evidence="1">Multi-pass membrane protein</topology>
    </subcellularLocation>
</comment>
<comment type="similarity">
    <text evidence="1">Belongs to the UPF0761 family.</text>
</comment>
<accession>Q0HNH1</accession>
<reference key="1">
    <citation type="submission" date="2006-08" db="EMBL/GenBank/DDBJ databases">
        <title>Complete sequence of Shewanella sp. MR-4.</title>
        <authorList>
            <consortium name="US DOE Joint Genome Institute"/>
            <person name="Copeland A."/>
            <person name="Lucas S."/>
            <person name="Lapidus A."/>
            <person name="Barry K."/>
            <person name="Detter J.C."/>
            <person name="Glavina del Rio T."/>
            <person name="Hammon N."/>
            <person name="Israni S."/>
            <person name="Dalin E."/>
            <person name="Tice H."/>
            <person name="Pitluck S."/>
            <person name="Kiss H."/>
            <person name="Brettin T."/>
            <person name="Bruce D."/>
            <person name="Han C."/>
            <person name="Tapia R."/>
            <person name="Gilna P."/>
            <person name="Schmutz J."/>
            <person name="Larimer F."/>
            <person name="Land M."/>
            <person name="Hauser L."/>
            <person name="Kyrpides N."/>
            <person name="Mikhailova N."/>
            <person name="Nealson K."/>
            <person name="Konstantinidis K."/>
            <person name="Klappenbach J."/>
            <person name="Tiedje J."/>
            <person name="Richardson P."/>
        </authorList>
    </citation>
    <scope>NUCLEOTIDE SEQUENCE [LARGE SCALE GENOMIC DNA]</scope>
    <source>
        <strain>MR-4</strain>
    </source>
</reference>
<dbReference type="EMBL" id="CP000446">
    <property type="protein sequence ID" value="ABI37396.1"/>
    <property type="molecule type" value="Genomic_DNA"/>
</dbReference>
<dbReference type="RefSeq" id="WP_011621122.1">
    <property type="nucleotide sequence ID" value="NC_008321.1"/>
</dbReference>
<dbReference type="KEGG" id="she:Shewmr4_0316"/>
<dbReference type="HOGENOM" id="CLU_032288_0_0_6"/>
<dbReference type="GO" id="GO:0005886">
    <property type="term" value="C:plasma membrane"/>
    <property type="evidence" value="ECO:0007669"/>
    <property type="project" value="UniProtKB-SubCell"/>
</dbReference>
<dbReference type="HAMAP" id="MF_00672">
    <property type="entry name" value="UPF0761"/>
    <property type="match status" value="1"/>
</dbReference>
<dbReference type="InterPro" id="IPR023679">
    <property type="entry name" value="UPF0761_bac"/>
</dbReference>
<dbReference type="InterPro" id="IPR017039">
    <property type="entry name" value="Virul_fac_BrkB"/>
</dbReference>
<dbReference type="NCBIfam" id="NF002457">
    <property type="entry name" value="PRK01637.1"/>
    <property type="match status" value="1"/>
</dbReference>
<dbReference type="NCBIfam" id="TIGR00765">
    <property type="entry name" value="yihY_not_rbn"/>
    <property type="match status" value="1"/>
</dbReference>
<dbReference type="PANTHER" id="PTHR30213">
    <property type="entry name" value="INNER MEMBRANE PROTEIN YHJD"/>
    <property type="match status" value="1"/>
</dbReference>
<dbReference type="PANTHER" id="PTHR30213:SF0">
    <property type="entry name" value="UPF0761 MEMBRANE PROTEIN YIHY"/>
    <property type="match status" value="1"/>
</dbReference>
<dbReference type="Pfam" id="PF03631">
    <property type="entry name" value="Virul_fac_BrkB"/>
    <property type="match status" value="1"/>
</dbReference>
<evidence type="ECO:0000255" key="1">
    <source>
        <dbReference type="HAMAP-Rule" id="MF_00672"/>
    </source>
</evidence>
<evidence type="ECO:0000256" key="2">
    <source>
        <dbReference type="SAM" id="MobiDB-lite"/>
    </source>
</evidence>
<proteinExistence type="inferred from homology"/>
<feature type="chain" id="PRO_1000044729" description="UPF0761 membrane protein Shewmr4_0316">
    <location>
        <begin position="1"/>
        <end position="337"/>
    </location>
</feature>
<feature type="transmembrane region" description="Helical" evidence="1">
    <location>
        <begin position="4"/>
        <end position="24"/>
    </location>
</feature>
<feature type="transmembrane region" description="Helical" evidence="1">
    <location>
        <begin position="45"/>
        <end position="65"/>
    </location>
</feature>
<feature type="transmembrane region" description="Helical" evidence="1">
    <location>
        <begin position="102"/>
        <end position="122"/>
    </location>
</feature>
<feature type="transmembrane region" description="Helical" evidence="1">
    <location>
        <begin position="137"/>
        <end position="157"/>
    </location>
</feature>
<feature type="transmembrane region" description="Helical" evidence="1">
    <location>
        <begin position="183"/>
        <end position="203"/>
    </location>
</feature>
<feature type="transmembrane region" description="Helical" evidence="1">
    <location>
        <begin position="213"/>
        <end position="233"/>
    </location>
</feature>
<feature type="transmembrane region" description="Helical" evidence="1">
    <location>
        <begin position="247"/>
        <end position="267"/>
    </location>
</feature>
<feature type="region of interest" description="Disordered" evidence="2">
    <location>
        <begin position="291"/>
        <end position="337"/>
    </location>
</feature>
<feature type="compositionally biased region" description="Polar residues" evidence="2">
    <location>
        <begin position="307"/>
        <end position="319"/>
    </location>
</feature>
<feature type="compositionally biased region" description="Polar residues" evidence="2">
    <location>
        <begin position="328"/>
        <end position="337"/>
    </location>
</feature>
<sequence length="337" mass="36852">MTKKIELAQIQVLFLGIWRFLLHLRQRLVEDQINIRAGHLAYVTLLSLVPMVAVTMSMLSAFPVFKGIRGQIEAFVYENFLPAAGDTVQVYINEFVGNASKGTAVGIAALVVVAIMLISAIDKSLNNIWRTKEKRSVVVAFSMYWMVITLGPVLVGASLVATSYVVSLKLFEGDALSGVMPLFIERLPLFFSVAAFLLLYMVVPNQKVKFWHALLGAVVAALLFELGKKGFALYVTKFPSYEAIYGALATIPILFVWVYLSWMIVLLGAEITAAMPEYLDYESSSDINETNLDGQPLAAQDTPAAQPETTSGQSTQVLETTGELAATAPQSTTLDKP</sequence>
<gene>
    <name type="ordered locus">Shewmr4_0316</name>
</gene>